<accession>Q817U6</accession>
<feature type="chain" id="PRO_0000385719" description="GTPase Obg">
    <location>
        <begin position="1"/>
        <end position="428"/>
    </location>
</feature>
<feature type="domain" description="Obg" evidence="3">
    <location>
        <begin position="1"/>
        <end position="158"/>
    </location>
</feature>
<feature type="domain" description="OBG-type G" evidence="1">
    <location>
        <begin position="159"/>
        <end position="329"/>
    </location>
</feature>
<feature type="domain" description="OCT" evidence="2">
    <location>
        <begin position="350"/>
        <end position="428"/>
    </location>
</feature>
<feature type="binding site" evidence="1">
    <location>
        <begin position="165"/>
        <end position="172"/>
    </location>
    <ligand>
        <name>GTP</name>
        <dbReference type="ChEBI" id="CHEBI:37565"/>
    </ligand>
</feature>
<feature type="binding site" evidence="1">
    <location>
        <position position="172"/>
    </location>
    <ligand>
        <name>Mg(2+)</name>
        <dbReference type="ChEBI" id="CHEBI:18420"/>
    </ligand>
</feature>
<feature type="binding site" evidence="1">
    <location>
        <begin position="190"/>
        <end position="194"/>
    </location>
    <ligand>
        <name>GTP</name>
        <dbReference type="ChEBI" id="CHEBI:37565"/>
    </ligand>
</feature>
<feature type="binding site" evidence="1">
    <location>
        <position position="192"/>
    </location>
    <ligand>
        <name>Mg(2+)</name>
        <dbReference type="ChEBI" id="CHEBI:18420"/>
    </ligand>
</feature>
<feature type="binding site" evidence="1">
    <location>
        <begin position="212"/>
        <end position="215"/>
    </location>
    <ligand>
        <name>GTP</name>
        <dbReference type="ChEBI" id="CHEBI:37565"/>
    </ligand>
</feature>
<feature type="binding site" evidence="1">
    <location>
        <begin position="282"/>
        <end position="285"/>
    </location>
    <ligand>
        <name>GTP</name>
        <dbReference type="ChEBI" id="CHEBI:37565"/>
    </ligand>
</feature>
<feature type="binding site" evidence="1">
    <location>
        <begin position="310"/>
        <end position="312"/>
    </location>
    <ligand>
        <name>GTP</name>
        <dbReference type="ChEBI" id="CHEBI:37565"/>
    </ligand>
</feature>
<protein>
    <recommendedName>
        <fullName evidence="1">GTPase Obg</fullName>
        <ecNumber evidence="1">3.6.5.-</ecNumber>
    </recommendedName>
    <alternativeName>
        <fullName evidence="1">GTP-binding protein Obg</fullName>
    </alternativeName>
</protein>
<sequence length="428" mass="47196">MFVDQVKIYVKGGDGGNGMVAYRREKYVPKGGPAGGDGGKGADVVFVVEEGLRTLMDFRYQRHFKADRGQHGMSKGQHGRKSEDLLVKVPPGTVVKDEKTGQILADLVTHGQTAVIAKGGRGGRGNSRFATATNPAPEIAENGEPGQERDVILELKVLADVGLVGFPSVGKSTLLSVVSSARPKIAEYHFTTIVPNLGVVETGDNRSFVMADLPGLIEGAHAGVGLGHQFLRHIERTRVIVHVIDMSGLEGRDPYEDYVTINNELKEYNLRLTERPQVVVANKMDMPDAEENLQAFKEKVGDEVKIFPISAVTRQGVRDLLFEVANLIETTPEFPIHEVADESDTSVMYKFDTEGVKFEITRESDGTFVISGYDIEKTFKMTDFSRDESVRRFARQMRGMGIDEALRARGAKDGDIVKILEYEFEFID</sequence>
<name>OBG_BACCR</name>
<reference key="1">
    <citation type="journal article" date="2003" name="Nature">
        <title>Genome sequence of Bacillus cereus and comparative analysis with Bacillus anthracis.</title>
        <authorList>
            <person name="Ivanova N."/>
            <person name="Sorokin A."/>
            <person name="Anderson I."/>
            <person name="Galleron N."/>
            <person name="Candelon B."/>
            <person name="Kapatral V."/>
            <person name="Bhattacharyya A."/>
            <person name="Reznik G."/>
            <person name="Mikhailova N."/>
            <person name="Lapidus A."/>
            <person name="Chu L."/>
            <person name="Mazur M."/>
            <person name="Goltsman E."/>
            <person name="Larsen N."/>
            <person name="D'Souza M."/>
            <person name="Walunas T."/>
            <person name="Grechkin Y."/>
            <person name="Pusch G."/>
            <person name="Haselkorn R."/>
            <person name="Fonstein M."/>
            <person name="Ehrlich S.D."/>
            <person name="Overbeek R."/>
            <person name="Kyrpides N.C."/>
        </authorList>
    </citation>
    <scope>NUCLEOTIDE SEQUENCE [LARGE SCALE GENOMIC DNA]</scope>
    <source>
        <strain>ATCC 14579 / DSM 31 / CCUG 7414 / JCM 2152 / NBRC 15305 / NCIMB 9373 / NCTC 2599 / NRRL B-3711</strain>
    </source>
</reference>
<keyword id="KW-0963">Cytoplasm</keyword>
<keyword id="KW-0342">GTP-binding</keyword>
<keyword id="KW-0378">Hydrolase</keyword>
<keyword id="KW-0460">Magnesium</keyword>
<keyword id="KW-0479">Metal-binding</keyword>
<keyword id="KW-0547">Nucleotide-binding</keyword>
<keyword id="KW-1185">Reference proteome</keyword>
<gene>
    <name evidence="1" type="primary">obg</name>
    <name type="ordered locus">BC_4434</name>
</gene>
<evidence type="ECO:0000255" key="1">
    <source>
        <dbReference type="HAMAP-Rule" id="MF_01454"/>
    </source>
</evidence>
<evidence type="ECO:0000255" key="2">
    <source>
        <dbReference type="PROSITE-ProRule" id="PRU01229"/>
    </source>
</evidence>
<evidence type="ECO:0000255" key="3">
    <source>
        <dbReference type="PROSITE-ProRule" id="PRU01231"/>
    </source>
</evidence>
<organism>
    <name type="scientific">Bacillus cereus (strain ATCC 14579 / DSM 31 / CCUG 7414 / JCM 2152 / NBRC 15305 / NCIMB 9373 / NCTC 2599 / NRRL B-3711)</name>
    <dbReference type="NCBI Taxonomy" id="226900"/>
    <lineage>
        <taxon>Bacteria</taxon>
        <taxon>Bacillati</taxon>
        <taxon>Bacillota</taxon>
        <taxon>Bacilli</taxon>
        <taxon>Bacillales</taxon>
        <taxon>Bacillaceae</taxon>
        <taxon>Bacillus</taxon>
        <taxon>Bacillus cereus group</taxon>
    </lineage>
</organism>
<comment type="function">
    <text evidence="1">An essential GTPase which binds GTP, GDP and possibly (p)ppGpp with moderate affinity, with high nucleotide exchange rates and a fairly low GTP hydrolysis rate. Plays a role in control of the cell cycle, stress response, ribosome biogenesis and in those bacteria that undergo differentiation, in morphogenesis control.</text>
</comment>
<comment type="cofactor">
    <cofactor evidence="1">
        <name>Mg(2+)</name>
        <dbReference type="ChEBI" id="CHEBI:18420"/>
    </cofactor>
</comment>
<comment type="subunit">
    <text evidence="1">Monomer.</text>
</comment>
<comment type="subcellular location">
    <subcellularLocation>
        <location evidence="1">Cytoplasm</location>
    </subcellularLocation>
</comment>
<comment type="similarity">
    <text evidence="1">Belongs to the TRAFAC class OBG-HflX-like GTPase superfamily. OBG GTPase family.</text>
</comment>
<proteinExistence type="inferred from homology"/>
<dbReference type="EC" id="3.6.5.-" evidence="1"/>
<dbReference type="EMBL" id="AE016877">
    <property type="protein sequence ID" value="AAP11347.1"/>
    <property type="molecule type" value="Genomic_DNA"/>
</dbReference>
<dbReference type="RefSeq" id="NP_834146.1">
    <property type="nucleotide sequence ID" value="NC_004722.1"/>
</dbReference>
<dbReference type="SMR" id="Q817U6"/>
<dbReference type="STRING" id="226900.BC_4434"/>
<dbReference type="KEGG" id="bce:BC4434"/>
<dbReference type="PATRIC" id="fig|226900.8.peg.4585"/>
<dbReference type="HOGENOM" id="CLU_011747_2_1_9"/>
<dbReference type="OrthoDB" id="9807318at2"/>
<dbReference type="Proteomes" id="UP000001417">
    <property type="component" value="Chromosome"/>
</dbReference>
<dbReference type="GO" id="GO:0005737">
    <property type="term" value="C:cytoplasm"/>
    <property type="evidence" value="ECO:0007669"/>
    <property type="project" value="UniProtKB-SubCell"/>
</dbReference>
<dbReference type="GO" id="GO:0005525">
    <property type="term" value="F:GTP binding"/>
    <property type="evidence" value="ECO:0000318"/>
    <property type="project" value="GO_Central"/>
</dbReference>
<dbReference type="GO" id="GO:0003924">
    <property type="term" value="F:GTPase activity"/>
    <property type="evidence" value="ECO:0000318"/>
    <property type="project" value="GO_Central"/>
</dbReference>
<dbReference type="GO" id="GO:0000287">
    <property type="term" value="F:magnesium ion binding"/>
    <property type="evidence" value="ECO:0007669"/>
    <property type="project" value="InterPro"/>
</dbReference>
<dbReference type="GO" id="GO:0042254">
    <property type="term" value="P:ribosome biogenesis"/>
    <property type="evidence" value="ECO:0007669"/>
    <property type="project" value="UniProtKB-UniRule"/>
</dbReference>
<dbReference type="CDD" id="cd01898">
    <property type="entry name" value="Obg"/>
    <property type="match status" value="1"/>
</dbReference>
<dbReference type="FunFam" id="2.70.210.12:FF:000001">
    <property type="entry name" value="GTPase Obg"/>
    <property type="match status" value="1"/>
</dbReference>
<dbReference type="FunFam" id="3.40.50.300:FF:000515">
    <property type="entry name" value="GTPase Obg"/>
    <property type="match status" value="1"/>
</dbReference>
<dbReference type="Gene3D" id="3.30.300.350">
    <property type="entry name" value="GTP-binding protein OBG, C-terminal domain"/>
    <property type="match status" value="1"/>
</dbReference>
<dbReference type="Gene3D" id="2.70.210.12">
    <property type="entry name" value="GTP1/OBG domain"/>
    <property type="match status" value="1"/>
</dbReference>
<dbReference type="Gene3D" id="3.40.50.300">
    <property type="entry name" value="P-loop containing nucleotide triphosphate hydrolases"/>
    <property type="match status" value="1"/>
</dbReference>
<dbReference type="HAMAP" id="MF_01454">
    <property type="entry name" value="GTPase_Obg"/>
    <property type="match status" value="1"/>
</dbReference>
<dbReference type="InterPro" id="IPR031167">
    <property type="entry name" value="G_OBG"/>
</dbReference>
<dbReference type="InterPro" id="IPR006073">
    <property type="entry name" value="GTP-bd"/>
</dbReference>
<dbReference type="InterPro" id="IPR014100">
    <property type="entry name" value="GTP-bd_Obg/CgtA"/>
</dbReference>
<dbReference type="InterPro" id="IPR036346">
    <property type="entry name" value="GTP-bd_prot_GTP1/OBG_C_sf"/>
</dbReference>
<dbReference type="InterPro" id="IPR006074">
    <property type="entry name" value="GTP1-OBG_CS"/>
</dbReference>
<dbReference type="InterPro" id="IPR006169">
    <property type="entry name" value="GTP1_OBG_dom"/>
</dbReference>
<dbReference type="InterPro" id="IPR036726">
    <property type="entry name" value="GTP1_OBG_dom_sf"/>
</dbReference>
<dbReference type="InterPro" id="IPR045086">
    <property type="entry name" value="OBG_GTPase"/>
</dbReference>
<dbReference type="InterPro" id="IPR015349">
    <property type="entry name" value="OCT_dom"/>
</dbReference>
<dbReference type="InterPro" id="IPR027417">
    <property type="entry name" value="P-loop_NTPase"/>
</dbReference>
<dbReference type="InterPro" id="IPR005225">
    <property type="entry name" value="Small_GTP-bd"/>
</dbReference>
<dbReference type="NCBIfam" id="TIGR02729">
    <property type="entry name" value="Obg_CgtA"/>
    <property type="match status" value="1"/>
</dbReference>
<dbReference type="NCBIfam" id="TIGR03595">
    <property type="entry name" value="Obg_CgtA_exten"/>
    <property type="match status" value="1"/>
</dbReference>
<dbReference type="NCBIfam" id="NF008954">
    <property type="entry name" value="PRK12296.1"/>
    <property type="match status" value="1"/>
</dbReference>
<dbReference type="NCBIfam" id="NF008955">
    <property type="entry name" value="PRK12297.1"/>
    <property type="match status" value="1"/>
</dbReference>
<dbReference type="NCBIfam" id="NF008956">
    <property type="entry name" value="PRK12299.1"/>
    <property type="match status" value="1"/>
</dbReference>
<dbReference type="NCBIfam" id="TIGR00231">
    <property type="entry name" value="small_GTP"/>
    <property type="match status" value="1"/>
</dbReference>
<dbReference type="PANTHER" id="PTHR11702">
    <property type="entry name" value="DEVELOPMENTALLY REGULATED GTP-BINDING PROTEIN-RELATED"/>
    <property type="match status" value="1"/>
</dbReference>
<dbReference type="PANTHER" id="PTHR11702:SF31">
    <property type="entry name" value="MITOCHONDRIAL RIBOSOME-ASSOCIATED GTPASE 2"/>
    <property type="match status" value="1"/>
</dbReference>
<dbReference type="Pfam" id="PF09269">
    <property type="entry name" value="DUF1967"/>
    <property type="match status" value="1"/>
</dbReference>
<dbReference type="Pfam" id="PF01018">
    <property type="entry name" value="GTP1_OBG"/>
    <property type="match status" value="1"/>
</dbReference>
<dbReference type="Pfam" id="PF01926">
    <property type="entry name" value="MMR_HSR1"/>
    <property type="match status" value="1"/>
</dbReference>
<dbReference type="PIRSF" id="PIRSF002401">
    <property type="entry name" value="GTP_bd_Obg/CgtA"/>
    <property type="match status" value="1"/>
</dbReference>
<dbReference type="PRINTS" id="PR00326">
    <property type="entry name" value="GTP1OBG"/>
</dbReference>
<dbReference type="SUPFAM" id="SSF102741">
    <property type="entry name" value="Obg GTP-binding protein C-terminal domain"/>
    <property type="match status" value="1"/>
</dbReference>
<dbReference type="SUPFAM" id="SSF82051">
    <property type="entry name" value="Obg GTP-binding protein N-terminal domain"/>
    <property type="match status" value="1"/>
</dbReference>
<dbReference type="SUPFAM" id="SSF52540">
    <property type="entry name" value="P-loop containing nucleoside triphosphate hydrolases"/>
    <property type="match status" value="1"/>
</dbReference>
<dbReference type="PROSITE" id="PS51710">
    <property type="entry name" value="G_OBG"/>
    <property type="match status" value="1"/>
</dbReference>
<dbReference type="PROSITE" id="PS00905">
    <property type="entry name" value="GTP1_OBG"/>
    <property type="match status" value="1"/>
</dbReference>
<dbReference type="PROSITE" id="PS51883">
    <property type="entry name" value="OBG"/>
    <property type="match status" value="1"/>
</dbReference>
<dbReference type="PROSITE" id="PS51881">
    <property type="entry name" value="OCT"/>
    <property type="match status" value="1"/>
</dbReference>